<name>RL20_STAAC</name>
<feature type="chain" id="PRO_0000177223" description="Large ribosomal subunit protein bL20">
    <location>
        <begin position="1"/>
        <end position="118"/>
    </location>
</feature>
<protein>
    <recommendedName>
        <fullName evidence="1">Large ribosomal subunit protein bL20</fullName>
    </recommendedName>
    <alternativeName>
        <fullName evidence="2">50S ribosomal protein L20</fullName>
    </alternativeName>
</protein>
<gene>
    <name evidence="1" type="primary">rplT</name>
    <name type="ordered locus">SACOL1725</name>
</gene>
<reference key="1">
    <citation type="journal article" date="2005" name="J. Bacteriol.">
        <title>Insights on evolution of virulence and resistance from the complete genome analysis of an early methicillin-resistant Staphylococcus aureus strain and a biofilm-producing methicillin-resistant Staphylococcus epidermidis strain.</title>
        <authorList>
            <person name="Gill S.R."/>
            <person name="Fouts D.E."/>
            <person name="Archer G.L."/>
            <person name="Mongodin E.F."/>
            <person name="DeBoy R.T."/>
            <person name="Ravel J."/>
            <person name="Paulsen I.T."/>
            <person name="Kolonay J.F."/>
            <person name="Brinkac L.M."/>
            <person name="Beanan M.J."/>
            <person name="Dodson R.J."/>
            <person name="Daugherty S.C."/>
            <person name="Madupu R."/>
            <person name="Angiuoli S.V."/>
            <person name="Durkin A.S."/>
            <person name="Haft D.H."/>
            <person name="Vamathevan J.J."/>
            <person name="Khouri H."/>
            <person name="Utterback T.R."/>
            <person name="Lee C."/>
            <person name="Dimitrov G."/>
            <person name="Jiang L."/>
            <person name="Qin H."/>
            <person name="Weidman J."/>
            <person name="Tran K."/>
            <person name="Kang K.H."/>
            <person name="Hance I.R."/>
            <person name="Nelson K.E."/>
            <person name="Fraser C.M."/>
        </authorList>
    </citation>
    <scope>NUCLEOTIDE SEQUENCE [LARGE SCALE GENOMIC DNA]</scope>
    <source>
        <strain>COL</strain>
    </source>
</reference>
<proteinExistence type="inferred from homology"/>
<accession>Q5HF94</accession>
<dbReference type="EMBL" id="CP000046">
    <property type="protein sequence ID" value="AAW36830.1"/>
    <property type="molecule type" value="Genomic_DNA"/>
</dbReference>
<dbReference type="RefSeq" id="WP_001138360.1">
    <property type="nucleotide sequence ID" value="NZ_JBGOFO010000003.1"/>
</dbReference>
<dbReference type="SMR" id="Q5HF94"/>
<dbReference type="GeneID" id="98346040"/>
<dbReference type="KEGG" id="sac:SACOL1725"/>
<dbReference type="HOGENOM" id="CLU_123265_0_1_9"/>
<dbReference type="Proteomes" id="UP000000530">
    <property type="component" value="Chromosome"/>
</dbReference>
<dbReference type="GO" id="GO:1990904">
    <property type="term" value="C:ribonucleoprotein complex"/>
    <property type="evidence" value="ECO:0007669"/>
    <property type="project" value="UniProtKB-KW"/>
</dbReference>
<dbReference type="GO" id="GO:0005840">
    <property type="term" value="C:ribosome"/>
    <property type="evidence" value="ECO:0007669"/>
    <property type="project" value="UniProtKB-KW"/>
</dbReference>
<dbReference type="GO" id="GO:0019843">
    <property type="term" value="F:rRNA binding"/>
    <property type="evidence" value="ECO:0007669"/>
    <property type="project" value="UniProtKB-UniRule"/>
</dbReference>
<dbReference type="GO" id="GO:0003735">
    <property type="term" value="F:structural constituent of ribosome"/>
    <property type="evidence" value="ECO:0007669"/>
    <property type="project" value="InterPro"/>
</dbReference>
<dbReference type="GO" id="GO:0000027">
    <property type="term" value="P:ribosomal large subunit assembly"/>
    <property type="evidence" value="ECO:0007669"/>
    <property type="project" value="UniProtKB-UniRule"/>
</dbReference>
<dbReference type="GO" id="GO:0006412">
    <property type="term" value="P:translation"/>
    <property type="evidence" value="ECO:0007669"/>
    <property type="project" value="InterPro"/>
</dbReference>
<dbReference type="CDD" id="cd07026">
    <property type="entry name" value="Ribosomal_L20"/>
    <property type="match status" value="1"/>
</dbReference>
<dbReference type="FunFam" id="1.10.1900.20:FF:000001">
    <property type="entry name" value="50S ribosomal protein L20"/>
    <property type="match status" value="1"/>
</dbReference>
<dbReference type="Gene3D" id="6.10.160.10">
    <property type="match status" value="1"/>
</dbReference>
<dbReference type="Gene3D" id="1.10.1900.20">
    <property type="entry name" value="Ribosomal protein L20"/>
    <property type="match status" value="1"/>
</dbReference>
<dbReference type="HAMAP" id="MF_00382">
    <property type="entry name" value="Ribosomal_bL20"/>
    <property type="match status" value="1"/>
</dbReference>
<dbReference type="InterPro" id="IPR005813">
    <property type="entry name" value="Ribosomal_bL20"/>
</dbReference>
<dbReference type="InterPro" id="IPR049946">
    <property type="entry name" value="RIBOSOMAL_L20_CS"/>
</dbReference>
<dbReference type="InterPro" id="IPR035566">
    <property type="entry name" value="Ribosomal_protein_bL20_C"/>
</dbReference>
<dbReference type="NCBIfam" id="TIGR01032">
    <property type="entry name" value="rplT_bact"/>
    <property type="match status" value="1"/>
</dbReference>
<dbReference type="PANTHER" id="PTHR10986">
    <property type="entry name" value="39S RIBOSOMAL PROTEIN L20"/>
    <property type="match status" value="1"/>
</dbReference>
<dbReference type="Pfam" id="PF00453">
    <property type="entry name" value="Ribosomal_L20"/>
    <property type="match status" value="1"/>
</dbReference>
<dbReference type="PRINTS" id="PR00062">
    <property type="entry name" value="RIBOSOMALL20"/>
</dbReference>
<dbReference type="SUPFAM" id="SSF74731">
    <property type="entry name" value="Ribosomal protein L20"/>
    <property type="match status" value="1"/>
</dbReference>
<dbReference type="PROSITE" id="PS00937">
    <property type="entry name" value="RIBOSOMAL_L20"/>
    <property type="match status" value="1"/>
</dbReference>
<comment type="function">
    <text evidence="1">Binds directly to 23S ribosomal RNA and is necessary for the in vitro assembly process of the 50S ribosomal subunit. It is not involved in the protein synthesizing functions of that subunit.</text>
</comment>
<comment type="similarity">
    <text evidence="1">Belongs to the bacterial ribosomal protein bL20 family.</text>
</comment>
<keyword id="KW-0687">Ribonucleoprotein</keyword>
<keyword id="KW-0689">Ribosomal protein</keyword>
<keyword id="KW-0694">RNA-binding</keyword>
<keyword id="KW-0699">rRNA-binding</keyword>
<organism>
    <name type="scientific">Staphylococcus aureus (strain COL)</name>
    <dbReference type="NCBI Taxonomy" id="93062"/>
    <lineage>
        <taxon>Bacteria</taxon>
        <taxon>Bacillati</taxon>
        <taxon>Bacillota</taxon>
        <taxon>Bacilli</taxon>
        <taxon>Bacillales</taxon>
        <taxon>Staphylococcaceae</taxon>
        <taxon>Staphylococcus</taxon>
    </lineage>
</organism>
<evidence type="ECO:0000255" key="1">
    <source>
        <dbReference type="HAMAP-Rule" id="MF_00382"/>
    </source>
</evidence>
<evidence type="ECO:0000305" key="2"/>
<sequence>MPRVKGGTVTRARRKKTIKLAKGYFGSKHTLYKVAKQQVMKSGQYAFRDRRQRKRDFRKLWITRINAAARQHEMSYSRLMNGLKKAGIDINRKMLSEIAISDEKAFAQLVTKAKDALK</sequence>